<keyword id="KW-1185">Reference proteome</keyword>
<keyword id="KW-0687">Ribonucleoprotein</keyword>
<keyword id="KW-0689">Ribosomal protein</keyword>
<keyword id="KW-0694">RNA-binding</keyword>
<keyword id="KW-0699">rRNA-binding</keyword>
<gene>
    <name evidence="1" type="primary">rplX</name>
    <name type="ordered locus">bbp_456</name>
</gene>
<organism>
    <name type="scientific">Buchnera aphidicola subsp. Baizongia pistaciae (strain Bp)</name>
    <dbReference type="NCBI Taxonomy" id="224915"/>
    <lineage>
        <taxon>Bacteria</taxon>
        <taxon>Pseudomonadati</taxon>
        <taxon>Pseudomonadota</taxon>
        <taxon>Gammaproteobacteria</taxon>
        <taxon>Enterobacterales</taxon>
        <taxon>Erwiniaceae</taxon>
        <taxon>Buchnera</taxon>
    </lineage>
</organism>
<proteinExistence type="inferred from homology"/>
<name>RL24_BUCBP</name>
<reference key="1">
    <citation type="journal article" date="2003" name="Proc. Natl. Acad. Sci. U.S.A.">
        <title>Reductive genome evolution in Buchnera aphidicola.</title>
        <authorList>
            <person name="van Ham R.C.H.J."/>
            <person name="Kamerbeek J."/>
            <person name="Palacios C."/>
            <person name="Rausell C."/>
            <person name="Abascal F."/>
            <person name="Bastolla U."/>
            <person name="Fernandez J.M."/>
            <person name="Jimenez L."/>
            <person name="Postigo M."/>
            <person name="Silva F.J."/>
            <person name="Tamames J."/>
            <person name="Viguera E."/>
            <person name="Latorre A."/>
            <person name="Valencia A."/>
            <person name="Moran F."/>
            <person name="Moya A."/>
        </authorList>
    </citation>
    <scope>NUCLEOTIDE SEQUENCE [LARGE SCALE GENOMIC DNA]</scope>
    <source>
        <strain>Bp</strain>
    </source>
</reference>
<protein>
    <recommendedName>
        <fullName evidence="1">Large ribosomal subunit protein uL24</fullName>
    </recommendedName>
    <alternativeName>
        <fullName evidence="2">50S ribosomal protein L24</fullName>
    </alternativeName>
</protein>
<comment type="function">
    <text evidence="1">One of two assembly initiator proteins, it binds directly to the 5'-end of the 23S rRNA, where it nucleates assembly of the 50S subunit.</text>
</comment>
<comment type="function">
    <text evidence="1">One of the proteins that surrounds the polypeptide exit tunnel on the outside of the subunit.</text>
</comment>
<comment type="subunit">
    <text evidence="1">Part of the 50S ribosomal subunit.</text>
</comment>
<comment type="similarity">
    <text evidence="1">Belongs to the universal ribosomal protein uL24 family.</text>
</comment>
<sequence length="104" mass="11425">MAAKIKKNDQVIVLIGKDKGKIGIVRKVIAKSKVIVEGVNIVKKHTKPSPSQNKKGGIVEQESSINISNIAILNPTTKKSDRIGFRVKNGKKVRFFKSNNTICN</sequence>
<evidence type="ECO:0000255" key="1">
    <source>
        <dbReference type="HAMAP-Rule" id="MF_01326"/>
    </source>
</evidence>
<evidence type="ECO:0000305" key="2"/>
<dbReference type="EMBL" id="AE016826">
    <property type="protein sequence ID" value="AAO27162.1"/>
    <property type="molecule type" value="Genomic_DNA"/>
</dbReference>
<dbReference type="RefSeq" id="WP_011091563.1">
    <property type="nucleotide sequence ID" value="NC_004545.1"/>
</dbReference>
<dbReference type="SMR" id="Q89A77"/>
<dbReference type="STRING" id="224915.bbp_456"/>
<dbReference type="KEGG" id="bab:bbp_456"/>
<dbReference type="eggNOG" id="COG0198">
    <property type="taxonomic scope" value="Bacteria"/>
</dbReference>
<dbReference type="HOGENOM" id="CLU_093315_2_2_6"/>
<dbReference type="OrthoDB" id="9807419at2"/>
<dbReference type="Proteomes" id="UP000000601">
    <property type="component" value="Chromosome"/>
</dbReference>
<dbReference type="GO" id="GO:1990904">
    <property type="term" value="C:ribonucleoprotein complex"/>
    <property type="evidence" value="ECO:0007669"/>
    <property type="project" value="UniProtKB-KW"/>
</dbReference>
<dbReference type="GO" id="GO:0005840">
    <property type="term" value="C:ribosome"/>
    <property type="evidence" value="ECO:0007669"/>
    <property type="project" value="UniProtKB-KW"/>
</dbReference>
<dbReference type="GO" id="GO:0019843">
    <property type="term" value="F:rRNA binding"/>
    <property type="evidence" value="ECO:0007669"/>
    <property type="project" value="UniProtKB-UniRule"/>
</dbReference>
<dbReference type="GO" id="GO:0003735">
    <property type="term" value="F:structural constituent of ribosome"/>
    <property type="evidence" value="ECO:0007669"/>
    <property type="project" value="InterPro"/>
</dbReference>
<dbReference type="GO" id="GO:0006412">
    <property type="term" value="P:translation"/>
    <property type="evidence" value="ECO:0007669"/>
    <property type="project" value="UniProtKB-UniRule"/>
</dbReference>
<dbReference type="CDD" id="cd06089">
    <property type="entry name" value="KOW_RPL26"/>
    <property type="match status" value="1"/>
</dbReference>
<dbReference type="FunFam" id="2.30.30.30:FF:000004">
    <property type="entry name" value="50S ribosomal protein L24"/>
    <property type="match status" value="1"/>
</dbReference>
<dbReference type="Gene3D" id="2.30.30.30">
    <property type="match status" value="1"/>
</dbReference>
<dbReference type="HAMAP" id="MF_01326_B">
    <property type="entry name" value="Ribosomal_uL24_B"/>
    <property type="match status" value="1"/>
</dbReference>
<dbReference type="InterPro" id="IPR014722">
    <property type="entry name" value="Rib_uL2_dom2"/>
</dbReference>
<dbReference type="InterPro" id="IPR003256">
    <property type="entry name" value="Ribosomal_uL24"/>
</dbReference>
<dbReference type="InterPro" id="IPR005825">
    <property type="entry name" value="Ribosomal_uL24_CS"/>
</dbReference>
<dbReference type="InterPro" id="IPR041988">
    <property type="entry name" value="Ribosomal_uL24_KOW"/>
</dbReference>
<dbReference type="InterPro" id="IPR008991">
    <property type="entry name" value="Translation_prot_SH3-like_sf"/>
</dbReference>
<dbReference type="NCBIfam" id="TIGR01079">
    <property type="entry name" value="rplX_bact"/>
    <property type="match status" value="1"/>
</dbReference>
<dbReference type="PANTHER" id="PTHR12903">
    <property type="entry name" value="MITOCHONDRIAL RIBOSOMAL PROTEIN L24"/>
    <property type="match status" value="1"/>
</dbReference>
<dbReference type="Pfam" id="PF17136">
    <property type="entry name" value="ribosomal_L24"/>
    <property type="match status" value="1"/>
</dbReference>
<dbReference type="SUPFAM" id="SSF50104">
    <property type="entry name" value="Translation proteins SH3-like domain"/>
    <property type="match status" value="1"/>
</dbReference>
<dbReference type="PROSITE" id="PS01108">
    <property type="entry name" value="RIBOSOMAL_L24"/>
    <property type="match status" value="1"/>
</dbReference>
<accession>Q89A77</accession>
<feature type="chain" id="PRO_0000130636" description="Large ribosomal subunit protein uL24">
    <location>
        <begin position="1"/>
        <end position="104"/>
    </location>
</feature>